<comment type="function">
    <text evidence="1">Forms part of the ribosomal stalk which helps the ribosome interact with GTP-bound translation factors.</text>
</comment>
<comment type="subunit">
    <text evidence="1">Part of the ribosomal stalk of the 50S ribosomal subunit. Interacts with L10 and the large rRNA to form the base of the stalk. L10 forms an elongated spine to which L12 dimers bind in a sequential fashion forming a multimeric L10(L12)X complex.</text>
</comment>
<comment type="PTM">
    <text evidence="1">One or more lysine residues are methylated.</text>
</comment>
<comment type="similarity">
    <text evidence="1">Belongs to the universal ribosomal protein uL11 family.</text>
</comment>
<gene>
    <name evidence="1" type="primary">rplK</name>
    <name type="ordered locus">BF4196</name>
</gene>
<name>RL11_BACFR</name>
<sequence length="147" mass="15836">MAKEVAGLIKLQIKGGAANPSPPVGPALGSKGINIMEFCKQFNARTQDKAGKILPVIITYYADKSFDFVIKTPPVAIQLLEVAKVKSGSAEPNRKKVAEITWEQVRTIAQDKMVDLNCFTVEAAMRMVAGTARSMGIAVKGEFPVNN</sequence>
<organism>
    <name type="scientific">Bacteroides fragilis (strain YCH46)</name>
    <dbReference type="NCBI Taxonomy" id="295405"/>
    <lineage>
        <taxon>Bacteria</taxon>
        <taxon>Pseudomonadati</taxon>
        <taxon>Bacteroidota</taxon>
        <taxon>Bacteroidia</taxon>
        <taxon>Bacteroidales</taxon>
        <taxon>Bacteroidaceae</taxon>
        <taxon>Bacteroides</taxon>
    </lineage>
</organism>
<evidence type="ECO:0000255" key="1">
    <source>
        <dbReference type="HAMAP-Rule" id="MF_00736"/>
    </source>
</evidence>
<evidence type="ECO:0000305" key="2"/>
<reference key="1">
    <citation type="journal article" date="2004" name="Proc. Natl. Acad. Sci. U.S.A.">
        <title>Genomic analysis of Bacteroides fragilis reveals extensive DNA inversions regulating cell surface adaptation.</title>
        <authorList>
            <person name="Kuwahara T."/>
            <person name="Yamashita A."/>
            <person name="Hirakawa H."/>
            <person name="Nakayama H."/>
            <person name="Toh H."/>
            <person name="Okada N."/>
            <person name="Kuhara S."/>
            <person name="Hattori M."/>
            <person name="Hayashi T."/>
            <person name="Ohnishi Y."/>
        </authorList>
    </citation>
    <scope>NUCLEOTIDE SEQUENCE [LARGE SCALE GENOMIC DNA]</scope>
    <source>
        <strain>YCH46</strain>
    </source>
</reference>
<dbReference type="EMBL" id="AP006841">
    <property type="protein sequence ID" value="BAD50939.1"/>
    <property type="molecule type" value="Genomic_DNA"/>
</dbReference>
<dbReference type="RefSeq" id="WP_005791514.1">
    <property type="nucleotide sequence ID" value="NZ_UYXF01000007.1"/>
</dbReference>
<dbReference type="RefSeq" id="YP_101473.1">
    <property type="nucleotide sequence ID" value="NC_006347.1"/>
</dbReference>
<dbReference type="SMR" id="Q64NJ3"/>
<dbReference type="STRING" id="295405.BF4196"/>
<dbReference type="GeneID" id="60368251"/>
<dbReference type="KEGG" id="bfr:BF4196"/>
<dbReference type="PATRIC" id="fig|295405.11.peg.4051"/>
<dbReference type="HOGENOM" id="CLU_074237_2_1_10"/>
<dbReference type="OrthoDB" id="9802408at2"/>
<dbReference type="Proteomes" id="UP000002197">
    <property type="component" value="Chromosome"/>
</dbReference>
<dbReference type="GO" id="GO:0022625">
    <property type="term" value="C:cytosolic large ribosomal subunit"/>
    <property type="evidence" value="ECO:0007669"/>
    <property type="project" value="TreeGrafter"/>
</dbReference>
<dbReference type="GO" id="GO:0070180">
    <property type="term" value="F:large ribosomal subunit rRNA binding"/>
    <property type="evidence" value="ECO:0007669"/>
    <property type="project" value="UniProtKB-UniRule"/>
</dbReference>
<dbReference type="GO" id="GO:0003735">
    <property type="term" value="F:structural constituent of ribosome"/>
    <property type="evidence" value="ECO:0007669"/>
    <property type="project" value="InterPro"/>
</dbReference>
<dbReference type="GO" id="GO:0006412">
    <property type="term" value="P:translation"/>
    <property type="evidence" value="ECO:0007669"/>
    <property type="project" value="UniProtKB-UniRule"/>
</dbReference>
<dbReference type="CDD" id="cd00349">
    <property type="entry name" value="Ribosomal_L11"/>
    <property type="match status" value="1"/>
</dbReference>
<dbReference type="FunFam" id="1.10.10.250:FF:000001">
    <property type="entry name" value="50S ribosomal protein L11"/>
    <property type="match status" value="1"/>
</dbReference>
<dbReference type="FunFam" id="3.30.1550.10:FF:000001">
    <property type="entry name" value="50S ribosomal protein L11"/>
    <property type="match status" value="1"/>
</dbReference>
<dbReference type="Gene3D" id="1.10.10.250">
    <property type="entry name" value="Ribosomal protein L11, C-terminal domain"/>
    <property type="match status" value="1"/>
</dbReference>
<dbReference type="Gene3D" id="3.30.1550.10">
    <property type="entry name" value="Ribosomal protein L11/L12, N-terminal domain"/>
    <property type="match status" value="1"/>
</dbReference>
<dbReference type="HAMAP" id="MF_00736">
    <property type="entry name" value="Ribosomal_uL11"/>
    <property type="match status" value="1"/>
</dbReference>
<dbReference type="InterPro" id="IPR000911">
    <property type="entry name" value="Ribosomal_uL11"/>
</dbReference>
<dbReference type="InterPro" id="IPR006519">
    <property type="entry name" value="Ribosomal_uL11_bac-typ"/>
</dbReference>
<dbReference type="InterPro" id="IPR020783">
    <property type="entry name" value="Ribosomal_uL11_C"/>
</dbReference>
<dbReference type="InterPro" id="IPR036769">
    <property type="entry name" value="Ribosomal_uL11_C_sf"/>
</dbReference>
<dbReference type="InterPro" id="IPR020785">
    <property type="entry name" value="Ribosomal_uL11_CS"/>
</dbReference>
<dbReference type="InterPro" id="IPR020784">
    <property type="entry name" value="Ribosomal_uL11_N"/>
</dbReference>
<dbReference type="InterPro" id="IPR036796">
    <property type="entry name" value="Ribosomal_uL11_N_sf"/>
</dbReference>
<dbReference type="NCBIfam" id="TIGR01632">
    <property type="entry name" value="L11_bact"/>
    <property type="match status" value="1"/>
</dbReference>
<dbReference type="PANTHER" id="PTHR11661">
    <property type="entry name" value="60S RIBOSOMAL PROTEIN L12"/>
    <property type="match status" value="1"/>
</dbReference>
<dbReference type="PANTHER" id="PTHR11661:SF1">
    <property type="entry name" value="LARGE RIBOSOMAL SUBUNIT PROTEIN UL11M"/>
    <property type="match status" value="1"/>
</dbReference>
<dbReference type="Pfam" id="PF00298">
    <property type="entry name" value="Ribosomal_L11"/>
    <property type="match status" value="1"/>
</dbReference>
<dbReference type="Pfam" id="PF03946">
    <property type="entry name" value="Ribosomal_L11_N"/>
    <property type="match status" value="1"/>
</dbReference>
<dbReference type="SMART" id="SM00649">
    <property type="entry name" value="RL11"/>
    <property type="match status" value="1"/>
</dbReference>
<dbReference type="SUPFAM" id="SSF54747">
    <property type="entry name" value="Ribosomal L11/L12e N-terminal domain"/>
    <property type="match status" value="1"/>
</dbReference>
<dbReference type="SUPFAM" id="SSF46906">
    <property type="entry name" value="Ribosomal protein L11, C-terminal domain"/>
    <property type="match status" value="1"/>
</dbReference>
<dbReference type="PROSITE" id="PS00359">
    <property type="entry name" value="RIBOSOMAL_L11"/>
    <property type="match status" value="1"/>
</dbReference>
<keyword id="KW-0488">Methylation</keyword>
<keyword id="KW-0687">Ribonucleoprotein</keyword>
<keyword id="KW-0689">Ribosomal protein</keyword>
<keyword id="KW-0694">RNA-binding</keyword>
<keyword id="KW-0699">rRNA-binding</keyword>
<protein>
    <recommendedName>
        <fullName evidence="1">Large ribosomal subunit protein uL11</fullName>
    </recommendedName>
    <alternativeName>
        <fullName evidence="2">50S ribosomal protein L11</fullName>
    </alternativeName>
</protein>
<proteinExistence type="inferred from homology"/>
<accession>Q64NJ3</accession>
<feature type="chain" id="PRO_0000104239" description="Large ribosomal subunit protein uL11">
    <location>
        <begin position="1"/>
        <end position="147"/>
    </location>
</feature>